<reference key="1">
    <citation type="submission" date="2007-05" db="EMBL/GenBank/DDBJ databases">
        <title>Complete sequence of Thermotoga petrophila RKU-1.</title>
        <authorList>
            <consortium name="US DOE Joint Genome Institute"/>
            <person name="Copeland A."/>
            <person name="Lucas S."/>
            <person name="Lapidus A."/>
            <person name="Barry K."/>
            <person name="Glavina del Rio T."/>
            <person name="Dalin E."/>
            <person name="Tice H."/>
            <person name="Pitluck S."/>
            <person name="Sims D."/>
            <person name="Brettin T."/>
            <person name="Bruce D."/>
            <person name="Detter J.C."/>
            <person name="Han C."/>
            <person name="Tapia R."/>
            <person name="Schmutz J."/>
            <person name="Larimer F."/>
            <person name="Land M."/>
            <person name="Hauser L."/>
            <person name="Kyrpides N."/>
            <person name="Mikhailova N."/>
            <person name="Nelson K."/>
            <person name="Gogarten J.P."/>
            <person name="Noll K."/>
            <person name="Richardson P."/>
        </authorList>
    </citation>
    <scope>NUCLEOTIDE SEQUENCE [LARGE SCALE GENOMIC DNA]</scope>
    <source>
        <strain>ATCC BAA-488 / DSM 13995 / JCM 10881 / RKU-1</strain>
    </source>
</reference>
<organism>
    <name type="scientific">Thermotoga petrophila (strain ATCC BAA-488 / DSM 13995 / JCM 10881 / RKU-1)</name>
    <dbReference type="NCBI Taxonomy" id="390874"/>
    <lineage>
        <taxon>Bacteria</taxon>
        <taxon>Thermotogati</taxon>
        <taxon>Thermotogota</taxon>
        <taxon>Thermotogae</taxon>
        <taxon>Thermotogales</taxon>
        <taxon>Thermotogaceae</taxon>
        <taxon>Thermotoga</taxon>
    </lineage>
</organism>
<evidence type="ECO:0000255" key="1">
    <source>
        <dbReference type="HAMAP-Rule" id="MF_00488"/>
    </source>
</evidence>
<keyword id="KW-0021">Allosteric enzyme</keyword>
<keyword id="KW-0963">Cytoplasm</keyword>
<keyword id="KW-0520">NAD</keyword>
<keyword id="KW-0560">Oxidoreductase</keyword>
<keyword id="KW-0597">Phosphoprotein</keyword>
<dbReference type="EC" id="1.1.1.27" evidence="1"/>
<dbReference type="EMBL" id="CP000702">
    <property type="protein sequence ID" value="ABQ46948.1"/>
    <property type="molecule type" value="Genomic_DNA"/>
</dbReference>
<dbReference type="RefSeq" id="WP_004082418.1">
    <property type="nucleotide sequence ID" value="NC_009486.1"/>
</dbReference>
<dbReference type="SMR" id="A5IL75"/>
<dbReference type="STRING" id="390874.Tpet_0930"/>
<dbReference type="KEGG" id="tpt:Tpet_0930"/>
<dbReference type="eggNOG" id="COG0039">
    <property type="taxonomic scope" value="Bacteria"/>
</dbReference>
<dbReference type="HOGENOM" id="CLU_045401_1_1_0"/>
<dbReference type="UniPathway" id="UPA00554">
    <property type="reaction ID" value="UER00611"/>
</dbReference>
<dbReference type="Proteomes" id="UP000006558">
    <property type="component" value="Chromosome"/>
</dbReference>
<dbReference type="GO" id="GO:0005737">
    <property type="term" value="C:cytoplasm"/>
    <property type="evidence" value="ECO:0007669"/>
    <property type="project" value="UniProtKB-SubCell"/>
</dbReference>
<dbReference type="GO" id="GO:0004459">
    <property type="term" value="F:L-lactate dehydrogenase activity"/>
    <property type="evidence" value="ECO:0007669"/>
    <property type="project" value="UniProtKB-UniRule"/>
</dbReference>
<dbReference type="GO" id="GO:0006096">
    <property type="term" value="P:glycolytic process"/>
    <property type="evidence" value="ECO:0007669"/>
    <property type="project" value="UniProtKB-UniRule"/>
</dbReference>
<dbReference type="GO" id="GO:0006089">
    <property type="term" value="P:lactate metabolic process"/>
    <property type="evidence" value="ECO:0007669"/>
    <property type="project" value="TreeGrafter"/>
</dbReference>
<dbReference type="CDD" id="cd05292">
    <property type="entry name" value="LDH_2"/>
    <property type="match status" value="1"/>
</dbReference>
<dbReference type="FunFam" id="3.40.50.720:FF:000018">
    <property type="entry name" value="Malate dehydrogenase"/>
    <property type="match status" value="1"/>
</dbReference>
<dbReference type="Gene3D" id="3.90.110.10">
    <property type="entry name" value="Lactate dehydrogenase/glycoside hydrolase, family 4, C-terminal"/>
    <property type="match status" value="1"/>
</dbReference>
<dbReference type="Gene3D" id="3.40.50.720">
    <property type="entry name" value="NAD(P)-binding Rossmann-like Domain"/>
    <property type="match status" value="1"/>
</dbReference>
<dbReference type="HAMAP" id="MF_00488">
    <property type="entry name" value="Lactate_dehydrog"/>
    <property type="match status" value="1"/>
</dbReference>
<dbReference type="InterPro" id="IPR001557">
    <property type="entry name" value="L-lactate/malate_DH"/>
</dbReference>
<dbReference type="InterPro" id="IPR011304">
    <property type="entry name" value="L-lactate_DH"/>
</dbReference>
<dbReference type="InterPro" id="IPR018177">
    <property type="entry name" value="L-lactate_DH_AS"/>
</dbReference>
<dbReference type="InterPro" id="IPR022383">
    <property type="entry name" value="Lactate/malate_DH_C"/>
</dbReference>
<dbReference type="InterPro" id="IPR001236">
    <property type="entry name" value="Lactate/malate_DH_N"/>
</dbReference>
<dbReference type="InterPro" id="IPR015955">
    <property type="entry name" value="Lactate_DH/Glyco_Ohase_4_C"/>
</dbReference>
<dbReference type="InterPro" id="IPR036291">
    <property type="entry name" value="NAD(P)-bd_dom_sf"/>
</dbReference>
<dbReference type="NCBIfam" id="TIGR01771">
    <property type="entry name" value="L-LDH-NAD"/>
    <property type="match status" value="1"/>
</dbReference>
<dbReference type="NCBIfam" id="NF000824">
    <property type="entry name" value="PRK00066.1"/>
    <property type="match status" value="1"/>
</dbReference>
<dbReference type="NCBIfam" id="NF004863">
    <property type="entry name" value="PRK06223.1"/>
    <property type="match status" value="1"/>
</dbReference>
<dbReference type="PANTHER" id="PTHR43128">
    <property type="entry name" value="L-2-HYDROXYCARBOXYLATE DEHYDROGENASE (NAD(P)(+))"/>
    <property type="match status" value="1"/>
</dbReference>
<dbReference type="PANTHER" id="PTHR43128:SF16">
    <property type="entry name" value="L-LACTATE DEHYDROGENASE"/>
    <property type="match status" value="1"/>
</dbReference>
<dbReference type="Pfam" id="PF02866">
    <property type="entry name" value="Ldh_1_C"/>
    <property type="match status" value="1"/>
</dbReference>
<dbReference type="Pfam" id="PF00056">
    <property type="entry name" value="Ldh_1_N"/>
    <property type="match status" value="1"/>
</dbReference>
<dbReference type="PIRSF" id="PIRSF000102">
    <property type="entry name" value="Lac_mal_DH"/>
    <property type="match status" value="1"/>
</dbReference>
<dbReference type="PRINTS" id="PR00086">
    <property type="entry name" value="LLDHDRGNASE"/>
</dbReference>
<dbReference type="SUPFAM" id="SSF56327">
    <property type="entry name" value="LDH C-terminal domain-like"/>
    <property type="match status" value="1"/>
</dbReference>
<dbReference type="SUPFAM" id="SSF51735">
    <property type="entry name" value="NAD(P)-binding Rossmann-fold domains"/>
    <property type="match status" value="1"/>
</dbReference>
<dbReference type="PROSITE" id="PS00064">
    <property type="entry name" value="L_LDH"/>
    <property type="match status" value="1"/>
</dbReference>
<comment type="function">
    <text evidence="1">Catalyzes the conversion of lactate to pyruvate.</text>
</comment>
<comment type="catalytic activity">
    <reaction evidence="1">
        <text>(S)-lactate + NAD(+) = pyruvate + NADH + H(+)</text>
        <dbReference type="Rhea" id="RHEA:23444"/>
        <dbReference type="ChEBI" id="CHEBI:15361"/>
        <dbReference type="ChEBI" id="CHEBI:15378"/>
        <dbReference type="ChEBI" id="CHEBI:16651"/>
        <dbReference type="ChEBI" id="CHEBI:57540"/>
        <dbReference type="ChEBI" id="CHEBI:57945"/>
        <dbReference type="EC" id="1.1.1.27"/>
    </reaction>
</comment>
<comment type="activity regulation">
    <text evidence="1">Allosterically activated by fructose 1,6-bisphosphate (FBP).</text>
</comment>
<comment type="pathway">
    <text evidence="1">Fermentation; pyruvate fermentation to lactate; (S)-lactate from pyruvate: step 1/1.</text>
</comment>
<comment type="subunit">
    <text evidence="1">Homotetramer.</text>
</comment>
<comment type="subcellular location">
    <subcellularLocation>
        <location evidence="1">Cytoplasm</location>
    </subcellularLocation>
</comment>
<comment type="similarity">
    <text evidence="1">Belongs to the LDH/MDH superfamily. LDH family.</text>
</comment>
<feature type="chain" id="PRO_1000026518" description="L-lactate dehydrogenase">
    <location>
        <begin position="1"/>
        <end position="319"/>
    </location>
</feature>
<feature type="active site" description="Proton acceptor" evidence="1">
    <location>
        <position position="172"/>
    </location>
</feature>
<feature type="binding site" evidence="1">
    <location>
        <position position="11"/>
    </location>
    <ligand>
        <name>NAD(+)</name>
        <dbReference type="ChEBI" id="CHEBI:57540"/>
    </ligand>
</feature>
<feature type="binding site" evidence="1">
    <location>
        <position position="32"/>
    </location>
    <ligand>
        <name>NAD(+)</name>
        <dbReference type="ChEBI" id="CHEBI:57540"/>
    </ligand>
</feature>
<feature type="binding site" evidence="1">
    <location>
        <position position="37"/>
    </location>
    <ligand>
        <name>NAD(+)</name>
        <dbReference type="ChEBI" id="CHEBI:57540"/>
    </ligand>
</feature>
<feature type="binding site" evidence="1">
    <location>
        <position position="62"/>
    </location>
    <ligand>
        <name>NAD(+)</name>
        <dbReference type="ChEBI" id="CHEBI:57540"/>
    </ligand>
</feature>
<feature type="binding site" evidence="1">
    <location>
        <begin position="76"/>
        <end position="77"/>
    </location>
    <ligand>
        <name>NAD(+)</name>
        <dbReference type="ChEBI" id="CHEBI:57540"/>
    </ligand>
</feature>
<feature type="binding site" evidence="1">
    <location>
        <position position="79"/>
    </location>
    <ligand>
        <name>substrate</name>
    </ligand>
</feature>
<feature type="binding site" evidence="1">
    <location>
        <position position="85"/>
    </location>
    <ligand>
        <name>substrate</name>
    </ligand>
</feature>
<feature type="binding site" evidence="1">
    <location>
        <begin position="115"/>
        <end position="117"/>
    </location>
    <ligand>
        <name>NAD(+)</name>
        <dbReference type="ChEBI" id="CHEBI:57540"/>
    </ligand>
</feature>
<feature type="binding site" evidence="1">
    <location>
        <begin position="117"/>
        <end position="120"/>
    </location>
    <ligand>
        <name>substrate</name>
    </ligand>
</feature>
<feature type="binding site" evidence="1">
    <location>
        <position position="140"/>
    </location>
    <ligand>
        <name>NAD(+)</name>
        <dbReference type="ChEBI" id="CHEBI:57540"/>
    </ligand>
</feature>
<feature type="binding site" evidence="1">
    <location>
        <begin position="145"/>
        <end position="148"/>
    </location>
    <ligand>
        <name>substrate</name>
    </ligand>
</feature>
<feature type="binding site" evidence="1">
    <location>
        <position position="150"/>
    </location>
    <ligand>
        <name>beta-D-fructose 1,6-bisphosphate</name>
        <dbReference type="ChEBI" id="CHEBI:32966"/>
        <note>allosteric activator</note>
    </ligand>
</feature>
<feature type="binding site" evidence="1">
    <location>
        <position position="165"/>
    </location>
    <ligand>
        <name>beta-D-fructose 1,6-bisphosphate</name>
        <dbReference type="ChEBI" id="CHEBI:32966"/>
        <note>allosteric activator</note>
    </ligand>
</feature>
<feature type="binding site" evidence="1">
    <location>
        <position position="226"/>
    </location>
    <ligand>
        <name>substrate</name>
    </ligand>
</feature>
<feature type="modified residue" description="Phosphotyrosine" evidence="1">
    <location>
        <position position="217"/>
    </location>
</feature>
<proteinExistence type="inferred from homology"/>
<name>LDH_THEP1</name>
<gene>
    <name evidence="1" type="primary">ldh</name>
    <name type="ordered locus">Tpet_0930</name>
</gene>
<protein>
    <recommendedName>
        <fullName evidence="1">L-lactate dehydrogenase</fullName>
        <shortName evidence="1">L-LDH</shortName>
        <ecNumber evidence="1">1.1.1.27</ecNumber>
    </recommendedName>
</protein>
<sequence length="319" mass="34994">MKIGIVGLGRVGSSTAFALLMKGFAREMVLIDVDKKRAEGDALDLIHGTPFTRRANIYAGDYADLKGSDVVIVAAGVPQKPGETRLQLLGRNARVMKEIARNVSKYAPDSIVIVVTNPVDVLTYFFLKESGMDPRKVFGSGTVLDTARLRTLIAQHCGFSPRSVHVYVIGEHGDSEVPVWSGAMIGGIPLQNMCQICQKCDSKILENFAEKTKRAAYEIIERKGATHYAIALAVADIVESIFFDEKRVLTLSVYLEDYLGVKDLCISVPVTLGKHGVERILELNLNEEELEAFRKSASILKNAINEITAEENKHQNTSG</sequence>
<accession>A5IL75</accession>